<comment type="function">
    <text>Major core structural protein.</text>
</comment>
<comment type="subcellular location">
    <subcellularLocation>
        <location evidence="4">Virion</location>
    </subcellularLocation>
    <subcellularLocation>
        <location evidence="6">Host cytoplasm</location>
    </subcellularLocation>
    <text>Localizes to the virion core.</text>
</comment>
<comment type="induction">
    <text evidence="3 5">Expressed in the intermediate phase of the viral replicative cycle.</text>
</comment>
<comment type="PTM">
    <text evidence="1 5">Undergoes morphogenesis-associated proteolysis which cleaves the 28 kDa to a 25-kDa product. Proteolytic cleavage of major core proteins P4a (OPG136/A10L), P4b (OPG129/A3L), and VP8 (OPG098/L4R), which occurs at a late stage of core formation, is required for production of infectious mature virions (MV).</text>
</comment>
<comment type="similarity">
    <text evidence="6">Belongs to the orthopoxvirus OPG098 family.</text>
</comment>
<proteinExistence type="evidence at protein level"/>
<name>VP8_VACCW</name>
<gene>
    <name type="primary">OPG098</name>
    <name type="ordered locus">VACWR091</name>
    <name type="ORF">L4R</name>
</gene>
<dbReference type="EMBL" id="X01978">
    <property type="protein sequence ID" value="CAA26013.1"/>
    <property type="molecule type" value="Genomic_DNA"/>
</dbReference>
<dbReference type="EMBL" id="M11758">
    <property type="protein sequence ID" value="AAA48232.1"/>
    <property type="molecule type" value="Genomic_DNA"/>
</dbReference>
<dbReference type="EMBL" id="AY243312">
    <property type="protein sequence ID" value="AAO89370.1"/>
    <property type="molecule type" value="Genomic_DNA"/>
</dbReference>
<dbReference type="PIR" id="A03867">
    <property type="entry name" value="WMVZ28"/>
</dbReference>
<dbReference type="PIR" id="D23092">
    <property type="entry name" value="WMVZF5"/>
</dbReference>
<dbReference type="RefSeq" id="YP_232973.1">
    <property type="nucleotide sequence ID" value="NC_006998.1"/>
</dbReference>
<dbReference type="DIP" id="DIP-2168N"/>
<dbReference type="IntAct" id="P03295">
    <property type="interactions" value="1"/>
</dbReference>
<dbReference type="MINT" id="P03295"/>
<dbReference type="DNASU" id="3707547"/>
<dbReference type="GeneID" id="3707547"/>
<dbReference type="KEGG" id="vg:3707547"/>
<dbReference type="Proteomes" id="UP000000344">
    <property type="component" value="Genome"/>
</dbReference>
<dbReference type="GO" id="GO:0030430">
    <property type="term" value="C:host cell cytoplasm"/>
    <property type="evidence" value="ECO:0007669"/>
    <property type="project" value="UniProtKB-SubCell"/>
</dbReference>
<dbReference type="GO" id="GO:0019028">
    <property type="term" value="C:viral capsid"/>
    <property type="evidence" value="ECO:0007669"/>
    <property type="project" value="InterPro"/>
</dbReference>
<dbReference type="GO" id="GO:0005198">
    <property type="term" value="F:structural molecule activity"/>
    <property type="evidence" value="ECO:0007669"/>
    <property type="project" value="InterPro"/>
</dbReference>
<dbReference type="InterPro" id="IPR007586">
    <property type="entry name" value="VP8_pox_nuc-bd"/>
</dbReference>
<dbReference type="Pfam" id="PF04498">
    <property type="entry name" value="Pox_VP8_L4R"/>
    <property type="match status" value="1"/>
</dbReference>
<reference key="1">
    <citation type="journal article" date="1985" name="Nucleic Acids Res.">
        <title>Nucleotide sequence of a cluster of early and late genes in a conserved segment of the vaccinia virus genome.</title>
        <authorList>
            <person name="Plucienniczak A."/>
            <person name="Schroeder E."/>
            <person name="Zettlmeissl G."/>
            <person name="Streeck R.E."/>
        </authorList>
    </citation>
    <scope>NUCLEOTIDE SEQUENCE [GENOMIC DNA]</scope>
</reference>
<reference key="2">
    <citation type="journal article" date="1984" name="J. Virol.">
        <title>Regulation of expression and nucleotide sequence of a late vaccinia virus gene.</title>
        <authorList>
            <person name="Weir J.P."/>
            <person name="Moss B."/>
        </authorList>
    </citation>
    <scope>NUCLEOTIDE SEQUENCE [GENOMIC DNA]</scope>
</reference>
<reference key="3">
    <citation type="journal article" date="1985" name="J. Virol.">
        <title>Use of a bacterial expression vector to identify the gene encoding a major core protein of vaccinia virus.</title>
        <authorList>
            <person name="Weir J.P."/>
            <person name="Moss B."/>
        </authorList>
    </citation>
    <scope>NUCLEOTIDE SEQUENCE [GENOMIC DNA]</scope>
</reference>
<reference key="4">
    <citation type="submission" date="2003-02" db="EMBL/GenBank/DDBJ databases">
        <title>Sequencing of the coding region of Vaccinia-WR to an average 9-fold redundancy and an error rate of 0.16/10kb.</title>
        <authorList>
            <person name="Esposito J.J."/>
            <person name="Frace A.M."/>
            <person name="Sammons S.A."/>
            <person name="Olsen-Rasmussen M."/>
            <person name="Osborne J."/>
            <person name="Wohlhueter R."/>
        </authorList>
    </citation>
    <scope>NUCLEOTIDE SEQUENCE [LARGE SCALE GENOMIC DNA]</scope>
</reference>
<reference key="5">
    <citation type="journal article" date="1988" name="Virology">
        <title>Biosynthesis and post-translational cleavage of vaccinia virus structural protein VP8.</title>
        <authorList>
            <person name="Yang W.-P."/>
            <person name="Kao S.-Y."/>
            <person name="Bauer W.R."/>
        </authorList>
    </citation>
    <scope>PROTEIN SEQUENCE OF 33-52</scope>
    <scope>PROTEOLYTIC CLEAVAGE</scope>
    <scope>INDUCTION</scope>
</reference>
<reference key="6">
    <citation type="journal article" date="1991" name="J. Gen. Virol.">
        <title>Proteolytic maturation of vaccinia virus core proteins: identification of a conserved motif at the N termini of the 4b and 25K virion proteins.</title>
        <authorList>
            <person name="van Slyke J.K."/>
            <person name="Franke C.A."/>
            <person name="Hruby D.E."/>
        </authorList>
    </citation>
    <scope>PROTEIN SEQUENCE OF 33-41</scope>
</reference>
<reference key="7">
    <citation type="journal article" date="1988" name="Virology">
        <title>Purification and characterization of vaccinia virus structural protein VP8.</title>
        <authorList>
            <person name="Yang W.P."/>
            <person name="Bauer W.R."/>
        </authorList>
    </citation>
    <scope>SUBCELLULAR LOCATION</scope>
    <scope>DNA-BINDING</scope>
</reference>
<reference key="8">
    <citation type="journal article" date="1997" name="Nucleic Acids Res.">
        <title>Vaccinia virion protein VP8, the 25 kDa product of the L4R gene, binds single-stranded DNA and RNA with similar affinity.</title>
        <authorList>
            <person name="Bayliss C.D."/>
            <person name="Smith G.L."/>
        </authorList>
    </citation>
    <scope>RNA-BINDING</scope>
    <scope>DNA-BINDING</scope>
</reference>
<reference key="9">
    <citation type="journal article" date="2004" name="J. Virol.">
        <title>Role of the I7 protein in proteolytic processing of vaccinia virus membrane and core components.</title>
        <authorList>
            <person name="Ansarah-Sobrinho C."/>
            <person name="Moss B."/>
        </authorList>
    </citation>
    <scope>PROTEOLYTIC CLEAVAGE</scope>
    <scope>MUTAGENESIS OF GLY-18 AND GLY-32</scope>
</reference>
<reference key="10">
    <citation type="journal article" date="2015" name="J. Virol.">
        <title>Deciphering poxvirus gene expression by RNA sequencing and ribosome profiling.</title>
        <authorList>
            <person name="Yang Z."/>
            <person name="Cao S."/>
            <person name="Martens C.A."/>
            <person name="Porcella S.F."/>
            <person name="Xie Z."/>
            <person name="Ma M."/>
            <person name="Shen B."/>
            <person name="Moss B."/>
        </authorList>
    </citation>
    <scope>INDUCTION</scope>
</reference>
<evidence type="ECO:0000269" key="1">
    <source>
    </source>
</evidence>
<evidence type="ECO:0000269" key="2">
    <source>
    </source>
</evidence>
<evidence type="ECO:0000269" key="3">
    <source>
    </source>
</evidence>
<evidence type="ECO:0000269" key="4">
    <source>
    </source>
</evidence>
<evidence type="ECO:0000269" key="5">
    <source>
    </source>
</evidence>
<evidence type="ECO:0000305" key="6"/>
<protein>
    <recommendedName>
        <fullName>Core protein VP8</fullName>
    </recommendedName>
    <alternativeName>
        <fullName>25 kDa major core protein</fullName>
    </alternativeName>
    <alternativeName>
        <fullName>F5 polypeptide</fullName>
    </alternativeName>
    <alternativeName>
        <fullName>L4 core protein</fullName>
    </alternativeName>
    <alternativeName>
        <fullName>P25K</fullName>
    </alternativeName>
</protein>
<organism>
    <name type="scientific">Vaccinia virus (strain Western Reserve)</name>
    <name type="common">VACV</name>
    <name type="synonym">Vaccinia virus (strain WR)</name>
    <dbReference type="NCBI Taxonomy" id="10254"/>
    <lineage>
        <taxon>Viruses</taxon>
        <taxon>Varidnaviria</taxon>
        <taxon>Bamfordvirae</taxon>
        <taxon>Nucleocytoviricota</taxon>
        <taxon>Pokkesviricetes</taxon>
        <taxon>Chitovirales</taxon>
        <taxon>Poxviridae</taxon>
        <taxon>Chordopoxvirinae</taxon>
        <taxon>Orthopoxvirus</taxon>
        <taxon>Vaccinia virus</taxon>
    </lineage>
</organism>
<sequence>MSLLLENLIEEDTIFFAGSISEYDDLQMVIAGAKSKFPRSMLSIFNIVPRTMSKYELELIHNENITGAMFTTMYNIRNNLGLGDDKLTIEAIENYFLDPNNEVMPLIINNTDMTAVIPKKSGRRKNKNMVIFRQGSSPILCIFETRKKINIYKENMESASTEYTPIGDNKALISKYAGINILNVYSPSTSIRLNAIYGFTNKNKLEKLSTNKELESYSSSPLQEPIRLNDFLGLLECVKKNIPLTDIPTKD</sequence>
<organismHost>
    <name type="scientific">Bos taurus</name>
    <name type="common">Bovine</name>
    <dbReference type="NCBI Taxonomy" id="9913"/>
</organismHost>
<keyword id="KW-0903">Direct protein sequencing</keyword>
<keyword id="KW-1035">Host cytoplasm</keyword>
<keyword id="KW-1185">Reference proteome</keyword>
<keyword id="KW-0946">Virion</keyword>
<accession>P03295</accession>
<accession>Q76ZT5</accession>
<feature type="propeptide" id="PRO_0000040591" description="Removed by core protease OPG083/I7" evidence="2 5">
    <location>
        <begin position="1"/>
        <end position="32"/>
    </location>
</feature>
<feature type="chain" id="PRO_0000040592" description="Core protein VP8">
    <location>
        <begin position="33"/>
        <end position="251"/>
    </location>
</feature>
<feature type="site" description="Cleavage; by core protease OPG083/I7" evidence="6">
    <location>
        <begin position="18"/>
        <end position="19"/>
    </location>
</feature>
<feature type="site" description="Cleavage; by core protease OPG083/I7">
    <location>
        <begin position="32"/>
        <end position="33"/>
    </location>
</feature>
<feature type="mutagenesis site" description="No effect on cleavage by core protease I7." evidence="1">
    <original>G</original>
    <variation>A</variation>
    <location>
        <position position="18"/>
    </location>
</feature>
<feature type="mutagenesis site" description="Complete loss of cleavage by core protease I7." evidence="1">
    <original>G</original>
    <variation>A</variation>
    <location>
        <position position="32"/>
    </location>
</feature>
<feature type="sequence conflict" description="In Ref. 3; AAA48232." evidence="6" ref="3">
    <original>E</original>
    <variation>Q</variation>
    <location>
        <position position="144"/>
    </location>
</feature>